<reference key="1">
    <citation type="submission" date="2007-08" db="EMBL/GenBank/DDBJ databases">
        <title>Complete sequence of Thermotoga lettingae TMO.</title>
        <authorList>
            <consortium name="US DOE Joint Genome Institute"/>
            <person name="Copeland A."/>
            <person name="Lucas S."/>
            <person name="Lapidus A."/>
            <person name="Barry K."/>
            <person name="Glavina del Rio T."/>
            <person name="Dalin E."/>
            <person name="Tice H."/>
            <person name="Pitluck S."/>
            <person name="Foster B."/>
            <person name="Bruce D."/>
            <person name="Schmutz J."/>
            <person name="Larimer F."/>
            <person name="Land M."/>
            <person name="Hauser L."/>
            <person name="Kyrpides N."/>
            <person name="Mikhailova N."/>
            <person name="Nelson K."/>
            <person name="Gogarten J.P."/>
            <person name="Noll K."/>
            <person name="Richardson P."/>
        </authorList>
    </citation>
    <scope>NUCLEOTIDE SEQUENCE [LARGE SCALE GENOMIC DNA]</scope>
    <source>
        <strain>ATCC BAA-301 / DSM 14385 / NBRC 107922 / TMO</strain>
    </source>
</reference>
<name>SYE2_PSELT</name>
<keyword id="KW-0030">Aminoacyl-tRNA synthetase</keyword>
<keyword id="KW-0067">ATP-binding</keyword>
<keyword id="KW-0963">Cytoplasm</keyword>
<keyword id="KW-0436">Ligase</keyword>
<keyword id="KW-0547">Nucleotide-binding</keyword>
<keyword id="KW-0648">Protein biosynthesis</keyword>
<keyword id="KW-1185">Reference proteome</keyword>
<accession>A8F791</accession>
<feature type="chain" id="PRO_0000367789" description="Glutamate--tRNA ligase 2">
    <location>
        <begin position="1"/>
        <end position="466"/>
    </location>
</feature>
<feature type="short sequence motif" description="'HIGH' region" evidence="1">
    <location>
        <begin position="9"/>
        <end position="19"/>
    </location>
</feature>
<feature type="short sequence motif" description="'KMSKS' region" evidence="1">
    <location>
        <begin position="234"/>
        <end position="238"/>
    </location>
</feature>
<feature type="binding site" evidence="1">
    <location>
        <position position="237"/>
    </location>
    <ligand>
        <name>ATP</name>
        <dbReference type="ChEBI" id="CHEBI:30616"/>
    </ligand>
</feature>
<organism>
    <name type="scientific">Pseudothermotoga lettingae (strain ATCC BAA-301 / DSM 14385 / NBRC 107922 / TMO)</name>
    <name type="common">Thermotoga lettingae</name>
    <dbReference type="NCBI Taxonomy" id="416591"/>
    <lineage>
        <taxon>Bacteria</taxon>
        <taxon>Thermotogati</taxon>
        <taxon>Thermotogota</taxon>
        <taxon>Thermotogae</taxon>
        <taxon>Thermotogales</taxon>
        <taxon>Thermotogaceae</taxon>
        <taxon>Pseudothermotoga</taxon>
    </lineage>
</organism>
<protein>
    <recommendedName>
        <fullName evidence="1">Glutamate--tRNA ligase 2</fullName>
        <ecNumber evidence="1">6.1.1.17</ecNumber>
    </recommendedName>
    <alternativeName>
        <fullName evidence="1">Glutamyl-tRNA synthetase 2</fullName>
        <shortName evidence="1">GluRS 2</shortName>
    </alternativeName>
</protein>
<gene>
    <name evidence="1" type="primary">gltX2</name>
    <name type="ordered locus">Tlet_1469</name>
</gene>
<dbReference type="EC" id="6.1.1.17" evidence="1"/>
<dbReference type="EMBL" id="CP000812">
    <property type="protein sequence ID" value="ABV34025.1"/>
    <property type="molecule type" value="Genomic_DNA"/>
</dbReference>
<dbReference type="SMR" id="A8F791"/>
<dbReference type="STRING" id="416591.Tlet_1469"/>
<dbReference type="KEGG" id="tle:Tlet_1469"/>
<dbReference type="eggNOG" id="COG0008">
    <property type="taxonomic scope" value="Bacteria"/>
</dbReference>
<dbReference type="HOGENOM" id="CLU_015768_6_3_0"/>
<dbReference type="OrthoDB" id="9807503at2"/>
<dbReference type="Proteomes" id="UP000002016">
    <property type="component" value="Chromosome"/>
</dbReference>
<dbReference type="GO" id="GO:0005829">
    <property type="term" value="C:cytosol"/>
    <property type="evidence" value="ECO:0007669"/>
    <property type="project" value="TreeGrafter"/>
</dbReference>
<dbReference type="GO" id="GO:0005524">
    <property type="term" value="F:ATP binding"/>
    <property type="evidence" value="ECO:0007669"/>
    <property type="project" value="UniProtKB-UniRule"/>
</dbReference>
<dbReference type="GO" id="GO:0004818">
    <property type="term" value="F:glutamate-tRNA ligase activity"/>
    <property type="evidence" value="ECO:0007669"/>
    <property type="project" value="UniProtKB-UniRule"/>
</dbReference>
<dbReference type="GO" id="GO:0000049">
    <property type="term" value="F:tRNA binding"/>
    <property type="evidence" value="ECO:0007669"/>
    <property type="project" value="InterPro"/>
</dbReference>
<dbReference type="GO" id="GO:0008270">
    <property type="term" value="F:zinc ion binding"/>
    <property type="evidence" value="ECO:0007669"/>
    <property type="project" value="InterPro"/>
</dbReference>
<dbReference type="GO" id="GO:0006424">
    <property type="term" value="P:glutamyl-tRNA aminoacylation"/>
    <property type="evidence" value="ECO:0007669"/>
    <property type="project" value="UniProtKB-UniRule"/>
</dbReference>
<dbReference type="CDD" id="cd00808">
    <property type="entry name" value="GluRS_core"/>
    <property type="match status" value="1"/>
</dbReference>
<dbReference type="Gene3D" id="1.10.10.350">
    <property type="match status" value="1"/>
</dbReference>
<dbReference type="Gene3D" id="1.10.8.70">
    <property type="entry name" value="Glutamate-tRNA synthetase, class I, anticodon-binding domain 1"/>
    <property type="match status" value="1"/>
</dbReference>
<dbReference type="Gene3D" id="1.10.1160.10">
    <property type="entry name" value="Glutamyl-trna Synthetase, Domain 2"/>
    <property type="match status" value="1"/>
</dbReference>
<dbReference type="Gene3D" id="3.90.800.10">
    <property type="entry name" value="Glutamyl-tRNA Synthetase, Domain 3"/>
    <property type="match status" value="1"/>
</dbReference>
<dbReference type="Gene3D" id="3.40.50.620">
    <property type="entry name" value="HUPs"/>
    <property type="match status" value="1"/>
</dbReference>
<dbReference type="HAMAP" id="MF_00022">
    <property type="entry name" value="Glu_tRNA_synth_type1"/>
    <property type="match status" value="1"/>
</dbReference>
<dbReference type="InterPro" id="IPR045462">
    <property type="entry name" value="aa-tRNA-synth_I_cd-bd"/>
</dbReference>
<dbReference type="InterPro" id="IPR020751">
    <property type="entry name" value="aa-tRNA-synth_I_codon-bd_sub2"/>
</dbReference>
<dbReference type="InterPro" id="IPR001412">
    <property type="entry name" value="aa-tRNA-synth_I_CS"/>
</dbReference>
<dbReference type="InterPro" id="IPR008925">
    <property type="entry name" value="aa_tRNA-synth_I_cd-bd_sf"/>
</dbReference>
<dbReference type="InterPro" id="IPR004527">
    <property type="entry name" value="Glu-tRNA-ligase_bac/mito"/>
</dbReference>
<dbReference type="InterPro" id="IPR020752">
    <property type="entry name" value="Glu-tRNA-synth_I_codon-bd_sub1"/>
</dbReference>
<dbReference type="InterPro" id="IPR000924">
    <property type="entry name" value="Glu/Gln-tRNA-synth"/>
</dbReference>
<dbReference type="InterPro" id="IPR020058">
    <property type="entry name" value="Glu/Gln-tRNA-synth_Ib_cat-dom"/>
</dbReference>
<dbReference type="InterPro" id="IPR020061">
    <property type="entry name" value="Glu_tRNA_lig_a-bdl"/>
</dbReference>
<dbReference type="InterPro" id="IPR049940">
    <property type="entry name" value="GluQ/Sye"/>
</dbReference>
<dbReference type="InterPro" id="IPR033910">
    <property type="entry name" value="GluRS_core"/>
</dbReference>
<dbReference type="InterPro" id="IPR014729">
    <property type="entry name" value="Rossmann-like_a/b/a_fold"/>
</dbReference>
<dbReference type="NCBIfam" id="TIGR00464">
    <property type="entry name" value="gltX_bact"/>
    <property type="match status" value="1"/>
</dbReference>
<dbReference type="PANTHER" id="PTHR43311">
    <property type="entry name" value="GLUTAMATE--TRNA LIGASE"/>
    <property type="match status" value="1"/>
</dbReference>
<dbReference type="PANTHER" id="PTHR43311:SF2">
    <property type="entry name" value="GLUTAMATE--TRNA LIGASE, MITOCHONDRIAL-RELATED"/>
    <property type="match status" value="1"/>
</dbReference>
<dbReference type="Pfam" id="PF19269">
    <property type="entry name" value="Anticodon_2"/>
    <property type="match status" value="1"/>
</dbReference>
<dbReference type="Pfam" id="PF00749">
    <property type="entry name" value="tRNA-synt_1c"/>
    <property type="match status" value="2"/>
</dbReference>
<dbReference type="PRINTS" id="PR00987">
    <property type="entry name" value="TRNASYNTHGLU"/>
</dbReference>
<dbReference type="SUPFAM" id="SSF48163">
    <property type="entry name" value="An anticodon-binding domain of class I aminoacyl-tRNA synthetases"/>
    <property type="match status" value="1"/>
</dbReference>
<dbReference type="SUPFAM" id="SSF52374">
    <property type="entry name" value="Nucleotidylyl transferase"/>
    <property type="match status" value="1"/>
</dbReference>
<dbReference type="PROSITE" id="PS00178">
    <property type="entry name" value="AA_TRNA_LIGASE_I"/>
    <property type="match status" value="1"/>
</dbReference>
<proteinExistence type="inferred from homology"/>
<comment type="function">
    <text evidence="1">Catalyzes the attachment of glutamate to tRNA(Glu) in a two-step reaction: glutamate is first activated by ATP to form Glu-AMP and then transferred to the acceptor end of tRNA(Glu).</text>
</comment>
<comment type="catalytic activity">
    <reaction evidence="1">
        <text>tRNA(Glu) + L-glutamate + ATP = L-glutamyl-tRNA(Glu) + AMP + diphosphate</text>
        <dbReference type="Rhea" id="RHEA:23540"/>
        <dbReference type="Rhea" id="RHEA-COMP:9663"/>
        <dbReference type="Rhea" id="RHEA-COMP:9680"/>
        <dbReference type="ChEBI" id="CHEBI:29985"/>
        <dbReference type="ChEBI" id="CHEBI:30616"/>
        <dbReference type="ChEBI" id="CHEBI:33019"/>
        <dbReference type="ChEBI" id="CHEBI:78442"/>
        <dbReference type="ChEBI" id="CHEBI:78520"/>
        <dbReference type="ChEBI" id="CHEBI:456215"/>
        <dbReference type="EC" id="6.1.1.17"/>
    </reaction>
</comment>
<comment type="subunit">
    <text evidence="1">Monomer.</text>
</comment>
<comment type="subcellular location">
    <subcellularLocation>
        <location evidence="1">Cytoplasm</location>
    </subcellularLocation>
</comment>
<comment type="similarity">
    <text evidence="1">Belongs to the class-I aminoacyl-tRNA synthetase family. Glutamate--tRNA ligase type 1 subfamily.</text>
</comment>
<evidence type="ECO:0000255" key="1">
    <source>
        <dbReference type="HAMAP-Rule" id="MF_00022"/>
    </source>
</evidence>
<sequence length="466" mass="54194">MTVRLRFAPSPTGYLHVGGARTALFNWLYARKMNGKFVLRIEDTDLQRSTKESEKAIIESLKWCGIDWDEGPDIGGDFGPYRQSERVSEGIYKRYAQILVEKQCAYYTVYDKVDRKKVLFNTFEYPEEYEKKGHDITISFRVPEGITKFHDLLKGNMEFQNSVIGDFVIVKSDGFPTYNFAVVIDDYLMRITHVFRGEDHLSNTPKQIMIYKALGWEIPQFMHIPLILGFDRTPLSKRHGATSVEHFRKIGILNMGLMNYLALLGWSVGEEEVFDVKEKLVNFEPESISNKGVIFDPEKLEWVNGKHMRMINIEQLWNEFVEWIKFTNRKIPHCEESYALKVLNVCREKVNTLSQLYDFSYSFFFDDYTLEERFVSEYLSTSYAKEILRKAVVLFSELKDWSIEGTEKVCRALADMKIASKNKVFQLLRGAVTGKLVTPGLFETLSILGKKRVIERFEKLLNSVDC</sequence>